<sequence>MKFTLSWLKDHLDTTASVDEIAEALTDLGLEVEGIENPAARLAGFTLAHVKSASQHPDADRLRVCVVETNEGEKQIVCGAPNAREGITVVLAKPGDYVPGIDVTLSVGNIRGVESHGMMCSERELELSDEHDGIIELPSGEVGERFIDWLAENDPAKVDPVIEIAITPNRPDALGVAGIARDLAARGIGTLKTRAYAPVPGDFDCPIKVTIDEDTRDGCPLFTGRLIRDVRNGPSPQWLQDQLRAIGLRPISALVDITNYMTYDHNRPLHVFDADKVKGNLRVHRAAGGETLKALDEKEYTFQPGMMVISDDEGAESIAGIMGGDATGCTEETVNVFLESAYWDNVQIALAGRALKINSDARYRFERGVDPAYTLEGLEHATQMILDICGGEASTVVIAGAVPDHSRAYKLDAERVRSLVGMDIPESEQRQTLTRLGFRLEGNMAHVPSWRPDVQGEADLVEEVARIASLTKLVGRPLPRLTDGVPKPVMTPQQRRLSMARRTAASLGYNECVSYTFIDQASAALFGGGTDATMLENPISSEMSHMRPDLLPGLLAAAARNQARGFADLALFEAGPVFHGGEPGEQRAQIAGLLVGRTGPKDVHGAARAVDLYDAKADAEAVLAAMGAPAKVQILRDGDGWWHPGRHGRICLGPKKVLGVFGELHPRVLQAMDVKGPAVAFVLWPEEVPLPRKSGTTRAALALRDLQAVERDFAFVVDAGVEALTLVNAAAGADKALIEDVRVFDEFIGGSLGEGKKSLAITVRLQPTETTLKEKDIEAVSAKIVEKVAKATGGTLRG</sequence>
<accession>Q5LMS3</accession>
<dbReference type="EC" id="6.1.1.20" evidence="1"/>
<dbReference type="EMBL" id="CP000031">
    <property type="protein sequence ID" value="AAV96715.1"/>
    <property type="molecule type" value="Genomic_DNA"/>
</dbReference>
<dbReference type="RefSeq" id="WP_011049172.1">
    <property type="nucleotide sequence ID" value="NC_003911.12"/>
</dbReference>
<dbReference type="SMR" id="Q5LMS3"/>
<dbReference type="STRING" id="246200.SPO3489"/>
<dbReference type="PaxDb" id="246200-SPO3489"/>
<dbReference type="DNASU" id="3194649"/>
<dbReference type="KEGG" id="sil:SPO3489"/>
<dbReference type="eggNOG" id="COG0072">
    <property type="taxonomic scope" value="Bacteria"/>
</dbReference>
<dbReference type="eggNOG" id="COG0073">
    <property type="taxonomic scope" value="Bacteria"/>
</dbReference>
<dbReference type="HOGENOM" id="CLU_016891_0_0_5"/>
<dbReference type="OrthoDB" id="9805455at2"/>
<dbReference type="Proteomes" id="UP000001023">
    <property type="component" value="Chromosome"/>
</dbReference>
<dbReference type="GO" id="GO:0009328">
    <property type="term" value="C:phenylalanine-tRNA ligase complex"/>
    <property type="evidence" value="ECO:0007669"/>
    <property type="project" value="TreeGrafter"/>
</dbReference>
<dbReference type="GO" id="GO:0005524">
    <property type="term" value="F:ATP binding"/>
    <property type="evidence" value="ECO:0007669"/>
    <property type="project" value="UniProtKB-UniRule"/>
</dbReference>
<dbReference type="GO" id="GO:0000287">
    <property type="term" value="F:magnesium ion binding"/>
    <property type="evidence" value="ECO:0007669"/>
    <property type="project" value="UniProtKB-UniRule"/>
</dbReference>
<dbReference type="GO" id="GO:0004826">
    <property type="term" value="F:phenylalanine-tRNA ligase activity"/>
    <property type="evidence" value="ECO:0007669"/>
    <property type="project" value="UniProtKB-UniRule"/>
</dbReference>
<dbReference type="GO" id="GO:0000049">
    <property type="term" value="F:tRNA binding"/>
    <property type="evidence" value="ECO:0007669"/>
    <property type="project" value="UniProtKB-KW"/>
</dbReference>
<dbReference type="GO" id="GO:0006432">
    <property type="term" value="P:phenylalanyl-tRNA aminoacylation"/>
    <property type="evidence" value="ECO:0007669"/>
    <property type="project" value="UniProtKB-UniRule"/>
</dbReference>
<dbReference type="CDD" id="cd00769">
    <property type="entry name" value="PheRS_beta_core"/>
    <property type="match status" value="1"/>
</dbReference>
<dbReference type="CDD" id="cd02796">
    <property type="entry name" value="tRNA_bind_bactPheRS"/>
    <property type="match status" value="1"/>
</dbReference>
<dbReference type="FunFam" id="2.40.50.140:FF:000045">
    <property type="entry name" value="Phenylalanine--tRNA ligase beta subunit"/>
    <property type="match status" value="1"/>
</dbReference>
<dbReference type="Gene3D" id="3.30.56.10">
    <property type="match status" value="2"/>
</dbReference>
<dbReference type="Gene3D" id="3.30.930.10">
    <property type="entry name" value="Bira Bifunctional Protein, Domain 2"/>
    <property type="match status" value="1"/>
</dbReference>
<dbReference type="Gene3D" id="3.30.70.380">
    <property type="entry name" value="Ferrodoxin-fold anticodon-binding domain"/>
    <property type="match status" value="1"/>
</dbReference>
<dbReference type="Gene3D" id="2.40.50.140">
    <property type="entry name" value="Nucleic acid-binding proteins"/>
    <property type="match status" value="1"/>
</dbReference>
<dbReference type="Gene3D" id="3.50.40.10">
    <property type="entry name" value="Phenylalanyl-trna Synthetase, Chain B, domain 3"/>
    <property type="match status" value="1"/>
</dbReference>
<dbReference type="HAMAP" id="MF_00283">
    <property type="entry name" value="Phe_tRNA_synth_beta1"/>
    <property type="match status" value="1"/>
</dbReference>
<dbReference type="InterPro" id="IPR045864">
    <property type="entry name" value="aa-tRNA-synth_II/BPL/LPL"/>
</dbReference>
<dbReference type="InterPro" id="IPR005146">
    <property type="entry name" value="B3/B4_tRNA-bd"/>
</dbReference>
<dbReference type="InterPro" id="IPR009061">
    <property type="entry name" value="DNA-bd_dom_put_sf"/>
</dbReference>
<dbReference type="InterPro" id="IPR005121">
    <property type="entry name" value="Fdx_antiC-bd"/>
</dbReference>
<dbReference type="InterPro" id="IPR036690">
    <property type="entry name" value="Fdx_antiC-bd_sf"/>
</dbReference>
<dbReference type="InterPro" id="IPR012340">
    <property type="entry name" value="NA-bd_OB-fold"/>
</dbReference>
<dbReference type="InterPro" id="IPR045060">
    <property type="entry name" value="Phe-tRNA-ligase_IIc_bsu"/>
</dbReference>
<dbReference type="InterPro" id="IPR004532">
    <property type="entry name" value="Phe-tRNA-ligase_IIc_bsu_bact"/>
</dbReference>
<dbReference type="InterPro" id="IPR020825">
    <property type="entry name" value="Phe-tRNA_synthase-like_B3/B4"/>
</dbReference>
<dbReference type="InterPro" id="IPR041616">
    <property type="entry name" value="PheRS_beta_core"/>
</dbReference>
<dbReference type="InterPro" id="IPR002547">
    <property type="entry name" value="tRNA-bd_dom"/>
</dbReference>
<dbReference type="InterPro" id="IPR033714">
    <property type="entry name" value="tRNA_bind_bactPheRS"/>
</dbReference>
<dbReference type="InterPro" id="IPR005147">
    <property type="entry name" value="tRNA_synthase_B5-dom"/>
</dbReference>
<dbReference type="NCBIfam" id="TIGR00472">
    <property type="entry name" value="pheT_bact"/>
    <property type="match status" value="1"/>
</dbReference>
<dbReference type="NCBIfam" id="NF045760">
    <property type="entry name" value="YtpR"/>
    <property type="match status" value="1"/>
</dbReference>
<dbReference type="PANTHER" id="PTHR10947:SF0">
    <property type="entry name" value="PHENYLALANINE--TRNA LIGASE BETA SUBUNIT"/>
    <property type="match status" value="1"/>
</dbReference>
<dbReference type="PANTHER" id="PTHR10947">
    <property type="entry name" value="PHENYLALANYL-TRNA SYNTHETASE BETA CHAIN AND LEUCINE-RICH REPEAT-CONTAINING PROTEIN 47"/>
    <property type="match status" value="1"/>
</dbReference>
<dbReference type="Pfam" id="PF03483">
    <property type="entry name" value="B3_4"/>
    <property type="match status" value="1"/>
</dbReference>
<dbReference type="Pfam" id="PF03484">
    <property type="entry name" value="B5"/>
    <property type="match status" value="1"/>
</dbReference>
<dbReference type="Pfam" id="PF03147">
    <property type="entry name" value="FDX-ACB"/>
    <property type="match status" value="1"/>
</dbReference>
<dbReference type="Pfam" id="PF01588">
    <property type="entry name" value="tRNA_bind"/>
    <property type="match status" value="1"/>
</dbReference>
<dbReference type="Pfam" id="PF17759">
    <property type="entry name" value="tRNA_synthFbeta"/>
    <property type="match status" value="1"/>
</dbReference>
<dbReference type="SMART" id="SM00873">
    <property type="entry name" value="B3_4"/>
    <property type="match status" value="1"/>
</dbReference>
<dbReference type="SMART" id="SM00874">
    <property type="entry name" value="B5"/>
    <property type="match status" value="1"/>
</dbReference>
<dbReference type="SMART" id="SM00896">
    <property type="entry name" value="FDX-ACB"/>
    <property type="match status" value="1"/>
</dbReference>
<dbReference type="SUPFAM" id="SSF54991">
    <property type="entry name" value="Anticodon-binding domain of PheRS"/>
    <property type="match status" value="1"/>
</dbReference>
<dbReference type="SUPFAM" id="SSF55681">
    <property type="entry name" value="Class II aaRS and biotin synthetases"/>
    <property type="match status" value="1"/>
</dbReference>
<dbReference type="SUPFAM" id="SSF50249">
    <property type="entry name" value="Nucleic acid-binding proteins"/>
    <property type="match status" value="1"/>
</dbReference>
<dbReference type="SUPFAM" id="SSF56037">
    <property type="entry name" value="PheT/TilS domain"/>
    <property type="match status" value="1"/>
</dbReference>
<dbReference type="SUPFAM" id="SSF46955">
    <property type="entry name" value="Putative DNA-binding domain"/>
    <property type="match status" value="1"/>
</dbReference>
<dbReference type="PROSITE" id="PS51483">
    <property type="entry name" value="B5"/>
    <property type="match status" value="1"/>
</dbReference>
<dbReference type="PROSITE" id="PS51447">
    <property type="entry name" value="FDX_ACB"/>
    <property type="match status" value="1"/>
</dbReference>
<dbReference type="PROSITE" id="PS50886">
    <property type="entry name" value="TRBD"/>
    <property type="match status" value="1"/>
</dbReference>
<proteinExistence type="inferred from homology"/>
<organism>
    <name type="scientific">Ruegeria pomeroyi (strain ATCC 700808 / DSM 15171 / DSS-3)</name>
    <name type="common">Silicibacter pomeroyi</name>
    <dbReference type="NCBI Taxonomy" id="246200"/>
    <lineage>
        <taxon>Bacteria</taxon>
        <taxon>Pseudomonadati</taxon>
        <taxon>Pseudomonadota</taxon>
        <taxon>Alphaproteobacteria</taxon>
        <taxon>Rhodobacterales</taxon>
        <taxon>Roseobacteraceae</taxon>
        <taxon>Ruegeria</taxon>
    </lineage>
</organism>
<comment type="catalytic activity">
    <reaction evidence="1">
        <text>tRNA(Phe) + L-phenylalanine + ATP = L-phenylalanyl-tRNA(Phe) + AMP + diphosphate + H(+)</text>
        <dbReference type="Rhea" id="RHEA:19413"/>
        <dbReference type="Rhea" id="RHEA-COMP:9668"/>
        <dbReference type="Rhea" id="RHEA-COMP:9699"/>
        <dbReference type="ChEBI" id="CHEBI:15378"/>
        <dbReference type="ChEBI" id="CHEBI:30616"/>
        <dbReference type="ChEBI" id="CHEBI:33019"/>
        <dbReference type="ChEBI" id="CHEBI:58095"/>
        <dbReference type="ChEBI" id="CHEBI:78442"/>
        <dbReference type="ChEBI" id="CHEBI:78531"/>
        <dbReference type="ChEBI" id="CHEBI:456215"/>
        <dbReference type="EC" id="6.1.1.20"/>
    </reaction>
</comment>
<comment type="cofactor">
    <cofactor evidence="1">
        <name>Mg(2+)</name>
        <dbReference type="ChEBI" id="CHEBI:18420"/>
    </cofactor>
    <text evidence="1">Binds 2 magnesium ions per tetramer.</text>
</comment>
<comment type="subunit">
    <text evidence="1">Tetramer of two alpha and two beta subunits.</text>
</comment>
<comment type="subcellular location">
    <subcellularLocation>
        <location evidence="1">Cytoplasm</location>
    </subcellularLocation>
</comment>
<comment type="similarity">
    <text evidence="1">Belongs to the phenylalanyl-tRNA synthetase beta subunit family. Type 1 subfamily.</text>
</comment>
<gene>
    <name evidence="1" type="primary">pheT</name>
    <name type="ordered locus">SPO3489</name>
</gene>
<feature type="chain" id="PRO_0000126947" description="Phenylalanine--tRNA ligase beta subunit">
    <location>
        <begin position="1"/>
        <end position="798"/>
    </location>
</feature>
<feature type="domain" description="tRNA-binding" evidence="1">
    <location>
        <begin position="39"/>
        <end position="147"/>
    </location>
</feature>
<feature type="domain" description="B5" evidence="1">
    <location>
        <begin position="404"/>
        <end position="475"/>
    </location>
</feature>
<feature type="domain" description="FDX-ACB" evidence="1">
    <location>
        <begin position="704"/>
        <end position="797"/>
    </location>
</feature>
<feature type="binding site" evidence="1">
    <location>
        <position position="453"/>
    </location>
    <ligand>
        <name>Mg(2+)</name>
        <dbReference type="ChEBI" id="CHEBI:18420"/>
        <note>shared with alpha subunit</note>
    </ligand>
</feature>
<feature type="binding site" evidence="1">
    <location>
        <position position="459"/>
    </location>
    <ligand>
        <name>Mg(2+)</name>
        <dbReference type="ChEBI" id="CHEBI:18420"/>
        <note>shared with alpha subunit</note>
    </ligand>
</feature>
<feature type="binding site" evidence="1">
    <location>
        <position position="462"/>
    </location>
    <ligand>
        <name>Mg(2+)</name>
        <dbReference type="ChEBI" id="CHEBI:18420"/>
        <note>shared with alpha subunit</note>
    </ligand>
</feature>
<feature type="binding site" evidence="1">
    <location>
        <position position="463"/>
    </location>
    <ligand>
        <name>Mg(2+)</name>
        <dbReference type="ChEBI" id="CHEBI:18420"/>
        <note>shared with alpha subunit</note>
    </ligand>
</feature>
<evidence type="ECO:0000255" key="1">
    <source>
        <dbReference type="HAMAP-Rule" id="MF_00283"/>
    </source>
</evidence>
<reference key="1">
    <citation type="journal article" date="2004" name="Nature">
        <title>Genome sequence of Silicibacter pomeroyi reveals adaptations to the marine environment.</title>
        <authorList>
            <person name="Moran M.A."/>
            <person name="Buchan A."/>
            <person name="Gonzalez J.M."/>
            <person name="Heidelberg J.F."/>
            <person name="Whitman W.B."/>
            <person name="Kiene R.P."/>
            <person name="Henriksen J.R."/>
            <person name="King G.M."/>
            <person name="Belas R."/>
            <person name="Fuqua C."/>
            <person name="Brinkac L.M."/>
            <person name="Lewis M."/>
            <person name="Johri S."/>
            <person name="Weaver B."/>
            <person name="Pai G."/>
            <person name="Eisen J.A."/>
            <person name="Rahe E."/>
            <person name="Sheldon W.M."/>
            <person name="Ye W."/>
            <person name="Miller T.R."/>
            <person name="Carlton J."/>
            <person name="Rasko D.A."/>
            <person name="Paulsen I.T."/>
            <person name="Ren Q."/>
            <person name="Daugherty S.C."/>
            <person name="DeBoy R.T."/>
            <person name="Dodson R.J."/>
            <person name="Durkin A.S."/>
            <person name="Madupu R."/>
            <person name="Nelson W.C."/>
            <person name="Sullivan S.A."/>
            <person name="Rosovitz M.J."/>
            <person name="Haft D.H."/>
            <person name="Selengut J."/>
            <person name="Ward N."/>
        </authorList>
    </citation>
    <scope>NUCLEOTIDE SEQUENCE [LARGE SCALE GENOMIC DNA]</scope>
    <source>
        <strain>ATCC 700808 / DSM 15171 / DSS-3</strain>
    </source>
</reference>
<reference key="2">
    <citation type="journal article" date="2014" name="Stand. Genomic Sci.">
        <title>An updated genome annotation for the model marine bacterium Ruegeria pomeroyi DSS-3.</title>
        <authorList>
            <person name="Rivers A.R."/>
            <person name="Smith C.B."/>
            <person name="Moran M.A."/>
        </authorList>
    </citation>
    <scope>GENOME REANNOTATION</scope>
    <source>
        <strain>ATCC 700808 / DSM 15171 / DSS-3</strain>
    </source>
</reference>
<keyword id="KW-0030">Aminoacyl-tRNA synthetase</keyword>
<keyword id="KW-0067">ATP-binding</keyword>
<keyword id="KW-0963">Cytoplasm</keyword>
<keyword id="KW-0436">Ligase</keyword>
<keyword id="KW-0460">Magnesium</keyword>
<keyword id="KW-0479">Metal-binding</keyword>
<keyword id="KW-0547">Nucleotide-binding</keyword>
<keyword id="KW-0648">Protein biosynthesis</keyword>
<keyword id="KW-1185">Reference proteome</keyword>
<keyword id="KW-0694">RNA-binding</keyword>
<keyword id="KW-0820">tRNA-binding</keyword>
<protein>
    <recommendedName>
        <fullName evidence="1">Phenylalanine--tRNA ligase beta subunit</fullName>
        <ecNumber evidence="1">6.1.1.20</ecNumber>
    </recommendedName>
    <alternativeName>
        <fullName evidence="1">Phenylalanyl-tRNA synthetase beta subunit</fullName>
        <shortName evidence="1">PheRS</shortName>
    </alternativeName>
</protein>
<name>SYFB_RUEPO</name>